<proteinExistence type="inferred from homology"/>
<feature type="chain" id="PRO_1000135109" description="1-(5-phosphoribosyl)-5-[(5-phosphoribosylamino)methylideneamino] imidazole-4-carboxamide isomerase">
    <location>
        <begin position="1"/>
        <end position="245"/>
    </location>
</feature>
<feature type="active site" description="Proton acceptor" evidence="1">
    <location>
        <position position="7"/>
    </location>
</feature>
<feature type="active site" description="Proton donor" evidence="1">
    <location>
        <position position="129"/>
    </location>
</feature>
<comment type="catalytic activity">
    <reaction evidence="1">
        <text>1-(5-phospho-beta-D-ribosyl)-5-[(5-phospho-beta-D-ribosylamino)methylideneamino]imidazole-4-carboxamide = 5-[(5-phospho-1-deoxy-D-ribulos-1-ylimino)methylamino]-1-(5-phospho-beta-D-ribosyl)imidazole-4-carboxamide</text>
        <dbReference type="Rhea" id="RHEA:15469"/>
        <dbReference type="ChEBI" id="CHEBI:58435"/>
        <dbReference type="ChEBI" id="CHEBI:58525"/>
        <dbReference type="EC" id="5.3.1.16"/>
    </reaction>
</comment>
<comment type="pathway">
    <text evidence="1">Amino-acid biosynthesis; L-histidine biosynthesis; L-histidine from 5-phospho-alpha-D-ribose 1-diphosphate: step 4/9.</text>
</comment>
<comment type="subcellular location">
    <subcellularLocation>
        <location evidence="1">Cytoplasm</location>
    </subcellularLocation>
</comment>
<comment type="similarity">
    <text evidence="1">Belongs to the HisA/HisF family.</text>
</comment>
<evidence type="ECO:0000255" key="1">
    <source>
        <dbReference type="HAMAP-Rule" id="MF_01014"/>
    </source>
</evidence>
<organism>
    <name type="scientific">Escherichia coli O157:H7 (strain EC4115 / EHEC)</name>
    <dbReference type="NCBI Taxonomy" id="444450"/>
    <lineage>
        <taxon>Bacteria</taxon>
        <taxon>Pseudomonadati</taxon>
        <taxon>Pseudomonadota</taxon>
        <taxon>Gammaproteobacteria</taxon>
        <taxon>Enterobacterales</taxon>
        <taxon>Enterobacteriaceae</taxon>
        <taxon>Escherichia</taxon>
    </lineage>
</organism>
<dbReference type="EC" id="5.3.1.16" evidence="1"/>
<dbReference type="EMBL" id="CP001164">
    <property type="protein sequence ID" value="ACI39745.1"/>
    <property type="molecule type" value="Genomic_DNA"/>
</dbReference>
<dbReference type="RefSeq" id="WP_000586451.1">
    <property type="nucleotide sequence ID" value="NC_011353.1"/>
</dbReference>
<dbReference type="SMR" id="B5YU80"/>
<dbReference type="KEGG" id="ecf:ECH74115_2957"/>
<dbReference type="HOGENOM" id="CLU_048577_1_2_6"/>
<dbReference type="UniPathway" id="UPA00031">
    <property type="reaction ID" value="UER00009"/>
</dbReference>
<dbReference type="GO" id="GO:0005737">
    <property type="term" value="C:cytoplasm"/>
    <property type="evidence" value="ECO:0007669"/>
    <property type="project" value="UniProtKB-SubCell"/>
</dbReference>
<dbReference type="GO" id="GO:0003949">
    <property type="term" value="F:1-(5-phosphoribosyl)-5-[(5-phosphoribosylamino)methylideneamino]imidazole-4-carboxamide isomerase activity"/>
    <property type="evidence" value="ECO:0007669"/>
    <property type="project" value="UniProtKB-UniRule"/>
</dbReference>
<dbReference type="GO" id="GO:0000105">
    <property type="term" value="P:L-histidine biosynthetic process"/>
    <property type="evidence" value="ECO:0007669"/>
    <property type="project" value="UniProtKB-UniRule"/>
</dbReference>
<dbReference type="GO" id="GO:0000162">
    <property type="term" value="P:L-tryptophan biosynthetic process"/>
    <property type="evidence" value="ECO:0007669"/>
    <property type="project" value="TreeGrafter"/>
</dbReference>
<dbReference type="CDD" id="cd04732">
    <property type="entry name" value="HisA"/>
    <property type="match status" value="1"/>
</dbReference>
<dbReference type="FunFam" id="3.20.20.70:FF:000009">
    <property type="entry name" value="1-(5-phosphoribosyl)-5-[(5-phosphoribosylamino)methylideneamino] imidazole-4-carboxamide isomerase"/>
    <property type="match status" value="1"/>
</dbReference>
<dbReference type="Gene3D" id="3.20.20.70">
    <property type="entry name" value="Aldolase class I"/>
    <property type="match status" value="1"/>
</dbReference>
<dbReference type="HAMAP" id="MF_01014">
    <property type="entry name" value="HisA"/>
    <property type="match status" value="1"/>
</dbReference>
<dbReference type="InterPro" id="IPR013785">
    <property type="entry name" value="Aldolase_TIM"/>
</dbReference>
<dbReference type="InterPro" id="IPR006062">
    <property type="entry name" value="His_biosynth"/>
</dbReference>
<dbReference type="InterPro" id="IPR006063">
    <property type="entry name" value="HisA_bact_arch"/>
</dbReference>
<dbReference type="InterPro" id="IPR044524">
    <property type="entry name" value="Isoase_HisA-like"/>
</dbReference>
<dbReference type="InterPro" id="IPR023016">
    <property type="entry name" value="Isoase_HisA-like_bact"/>
</dbReference>
<dbReference type="InterPro" id="IPR011060">
    <property type="entry name" value="RibuloseP-bd_barrel"/>
</dbReference>
<dbReference type="NCBIfam" id="TIGR00007">
    <property type="entry name" value="1-(5-phosphoribosyl)-5-[(5-phosphoribosylamino)methylideneamino]imidazole-4-carboxamide isomerase"/>
    <property type="match status" value="1"/>
</dbReference>
<dbReference type="PANTHER" id="PTHR43090">
    <property type="entry name" value="1-(5-PHOSPHORIBOSYL)-5-[(5-PHOSPHORIBOSYLAMINO)METHYLIDENEAMINO] IMIDAZOLE-4-CARBOXAMIDE ISOMERASE"/>
    <property type="match status" value="1"/>
</dbReference>
<dbReference type="PANTHER" id="PTHR43090:SF2">
    <property type="entry name" value="1-(5-PHOSPHORIBOSYL)-5-[(5-PHOSPHORIBOSYLAMINO)METHYLIDENEAMINO] IMIDAZOLE-4-CARBOXAMIDE ISOMERASE"/>
    <property type="match status" value="1"/>
</dbReference>
<dbReference type="Pfam" id="PF00977">
    <property type="entry name" value="His_biosynth"/>
    <property type="match status" value="1"/>
</dbReference>
<dbReference type="SUPFAM" id="SSF51366">
    <property type="entry name" value="Ribulose-phoshate binding barrel"/>
    <property type="match status" value="1"/>
</dbReference>
<protein>
    <recommendedName>
        <fullName evidence="1">1-(5-phosphoribosyl)-5-[(5-phosphoribosylamino)methylideneamino] imidazole-4-carboxamide isomerase</fullName>
        <ecNumber evidence="1">5.3.1.16</ecNumber>
    </recommendedName>
    <alternativeName>
        <fullName evidence="1">Phosphoribosylformimino-5-aminoimidazole carboxamide ribotide isomerase</fullName>
    </alternativeName>
</protein>
<gene>
    <name evidence="1" type="primary">hisA</name>
    <name type="ordered locus">ECH74115_2957</name>
</gene>
<name>HIS4_ECO5E</name>
<reference key="1">
    <citation type="journal article" date="2011" name="Proc. Natl. Acad. Sci. U.S.A.">
        <title>Genomic anatomy of Escherichia coli O157:H7 outbreaks.</title>
        <authorList>
            <person name="Eppinger M."/>
            <person name="Mammel M.K."/>
            <person name="Leclerc J.E."/>
            <person name="Ravel J."/>
            <person name="Cebula T.A."/>
        </authorList>
    </citation>
    <scope>NUCLEOTIDE SEQUENCE [LARGE SCALE GENOMIC DNA]</scope>
    <source>
        <strain>EC4115 / EHEC</strain>
    </source>
</reference>
<sequence>MIIPALDLIDGTVVRLHQGDYGKQRDYGNDPLPRLQDYAAQGAEVLHLVDLTGAKDPAKRQIPLIKTLVAGVNVPVQVGGGVRSEEDVAALLEAGVARVVVGSTAVKSPEMVKGWFERFGADALVLALDVRIDEQGNKQVAVSGWQENSGVSLEQLVETYLPVGLKHVLCTDISRDGTLAGSNVSLYEEVCARYPQVAFQSSGGIGDINDVAALRGTGVRGVIVGRALLEGKFTVKEAISCWQNA</sequence>
<accession>B5YU80</accession>
<keyword id="KW-0028">Amino-acid biosynthesis</keyword>
<keyword id="KW-0963">Cytoplasm</keyword>
<keyword id="KW-0368">Histidine biosynthesis</keyword>
<keyword id="KW-0413">Isomerase</keyword>